<evidence type="ECO:0000250" key="1"/>
<evidence type="ECO:0000255" key="2"/>
<evidence type="ECO:0000305" key="3"/>
<sequence>MDRIVSSSHDRTSLLSTHKVLRNTYFLLSLTLAFSAITATASTVLMLPSPGLILTLVGMYGLMFLTYKTANKPTGIISAFAFTGFLGYILGPILNTYLSAGMGDVIAMALGGTALVFFCCSAYVLTTRKDMSFLGGMLMAGIVVVLIGMVANIFLQLPALHLAISAVFILISSGAILFETSNIIHGGETNYIRATVSLYVSLYNIFVSLLSILGFASRD</sequence>
<reference key="1">
    <citation type="journal article" date="2002" name="Proc. Natl. Acad. Sci. U.S.A.">
        <title>Extensive mosaic structure revealed by the complete genome sequence of uropathogenic Escherichia coli.</title>
        <authorList>
            <person name="Welch R.A."/>
            <person name="Burland V."/>
            <person name="Plunkett G. III"/>
            <person name="Redford P."/>
            <person name="Roesch P."/>
            <person name="Rasko D."/>
            <person name="Buckles E.L."/>
            <person name="Liou S.-R."/>
            <person name="Boutin A."/>
            <person name="Hackett J."/>
            <person name="Stroud D."/>
            <person name="Mayhew G.F."/>
            <person name="Rose D.J."/>
            <person name="Zhou S."/>
            <person name="Schwartz D.C."/>
            <person name="Perna N.T."/>
            <person name="Mobley H.L.T."/>
            <person name="Donnenberg M.S."/>
            <person name="Blattner F.R."/>
        </authorList>
    </citation>
    <scope>NUCLEOTIDE SEQUENCE [LARGE SCALE GENOMIC DNA]</scope>
    <source>
        <strain>CFT073 / ATCC 700928 / UPEC</strain>
    </source>
</reference>
<keyword id="KW-0997">Cell inner membrane</keyword>
<keyword id="KW-1003">Cell membrane</keyword>
<keyword id="KW-0472">Membrane</keyword>
<keyword id="KW-1185">Reference proteome</keyword>
<keyword id="KW-0812">Transmembrane</keyword>
<keyword id="KW-1133">Transmembrane helix</keyword>
<gene>
    <name type="primary">yccA</name>
    <name type="ordered locus">c1110</name>
</gene>
<accession>P0AAC7</accession>
<accession>P06967</accession>
<proteinExistence type="inferred from homology"/>
<protein>
    <recommendedName>
        <fullName>Inner membrane protein YccA</fullName>
    </recommendedName>
</protein>
<name>YCCA_ECOL6</name>
<comment type="subcellular location">
    <subcellularLocation>
        <location evidence="1">Cell inner membrane</location>
        <topology evidence="1">Multi-pass membrane protein</topology>
    </subcellularLocation>
</comment>
<comment type="similarity">
    <text evidence="3">Belongs to the BI1 family.</text>
</comment>
<dbReference type="EMBL" id="AE014075">
    <property type="protein sequence ID" value="AAN79578.1"/>
    <property type="molecule type" value="Genomic_DNA"/>
</dbReference>
<dbReference type="RefSeq" id="WP_000375136.1">
    <property type="nucleotide sequence ID" value="NZ_CP051263.1"/>
</dbReference>
<dbReference type="SMR" id="P0AAC7"/>
<dbReference type="STRING" id="199310.c1110"/>
<dbReference type="GeneID" id="89515849"/>
<dbReference type="KEGG" id="ecc:c1110"/>
<dbReference type="eggNOG" id="COG0670">
    <property type="taxonomic scope" value="Bacteria"/>
</dbReference>
<dbReference type="HOGENOM" id="CLU_058671_2_1_6"/>
<dbReference type="BioCyc" id="ECOL199310:C1110-MONOMER"/>
<dbReference type="Proteomes" id="UP000001410">
    <property type="component" value="Chromosome"/>
</dbReference>
<dbReference type="GO" id="GO:0005886">
    <property type="term" value="C:plasma membrane"/>
    <property type="evidence" value="ECO:0007669"/>
    <property type="project" value="UniProtKB-SubCell"/>
</dbReference>
<dbReference type="GO" id="GO:0043066">
    <property type="term" value="P:negative regulation of apoptotic process"/>
    <property type="evidence" value="ECO:0007669"/>
    <property type="project" value="InterPro"/>
</dbReference>
<dbReference type="CDD" id="cd10433">
    <property type="entry name" value="YccA_like"/>
    <property type="match status" value="1"/>
</dbReference>
<dbReference type="InterPro" id="IPR006213">
    <property type="entry name" value="Bax_inhbtr1_CS"/>
</dbReference>
<dbReference type="InterPro" id="IPR006214">
    <property type="entry name" value="Bax_inhibitor_1-related"/>
</dbReference>
<dbReference type="NCBIfam" id="NF007765">
    <property type="entry name" value="PRK10447.1"/>
    <property type="match status" value="1"/>
</dbReference>
<dbReference type="PANTHER" id="PTHR23291">
    <property type="entry name" value="BAX INHIBITOR-RELATED"/>
    <property type="match status" value="1"/>
</dbReference>
<dbReference type="PANTHER" id="PTHR23291:SF115">
    <property type="entry name" value="MODULATOR OF FTSH PROTEASE YCCA"/>
    <property type="match status" value="1"/>
</dbReference>
<dbReference type="Pfam" id="PF01027">
    <property type="entry name" value="Bax1-I"/>
    <property type="match status" value="1"/>
</dbReference>
<dbReference type="PROSITE" id="PS01243">
    <property type="entry name" value="BI1"/>
    <property type="match status" value="1"/>
</dbReference>
<feature type="chain" id="PRO_0000179103" description="Inner membrane protein YccA">
    <location>
        <begin position="1"/>
        <end position="219"/>
    </location>
</feature>
<feature type="topological domain" description="Periplasmic" evidence="2">
    <location>
        <begin position="1"/>
        <end position="22"/>
    </location>
</feature>
<feature type="transmembrane region" description="Helical" evidence="2">
    <location>
        <begin position="23"/>
        <end position="43"/>
    </location>
</feature>
<feature type="transmembrane region" description="Helical" evidence="2">
    <location>
        <begin position="44"/>
        <end position="64"/>
    </location>
</feature>
<feature type="topological domain" description="Periplasmic" evidence="2">
    <location>
        <begin position="65"/>
        <end position="73"/>
    </location>
</feature>
<feature type="transmembrane region" description="Helical" evidence="2">
    <location>
        <begin position="74"/>
        <end position="94"/>
    </location>
</feature>
<feature type="topological domain" description="Cytoplasmic" evidence="2">
    <location>
        <begin position="95"/>
        <end position="104"/>
    </location>
</feature>
<feature type="transmembrane region" description="Helical" evidence="2">
    <location>
        <begin position="105"/>
        <end position="125"/>
    </location>
</feature>
<feature type="topological domain" description="Periplasmic" evidence="2">
    <location>
        <begin position="126"/>
        <end position="133"/>
    </location>
</feature>
<feature type="transmembrane region" description="Helical" evidence="2">
    <location>
        <begin position="134"/>
        <end position="154"/>
    </location>
</feature>
<feature type="topological domain" description="Cytoplasmic" evidence="2">
    <location>
        <begin position="155"/>
        <end position="157"/>
    </location>
</feature>
<feature type="transmembrane region" description="Helical" evidence="2">
    <location>
        <begin position="158"/>
        <end position="178"/>
    </location>
</feature>
<feature type="topological domain" description="Periplasmic" evidence="2">
    <location>
        <begin position="179"/>
        <end position="195"/>
    </location>
</feature>
<feature type="transmembrane region" description="Helical" evidence="2">
    <location>
        <begin position="196"/>
        <end position="216"/>
    </location>
</feature>
<feature type="topological domain" description="Cytoplasmic" evidence="2">
    <location>
        <begin position="217"/>
        <end position="219"/>
    </location>
</feature>
<organism>
    <name type="scientific">Escherichia coli O6:H1 (strain CFT073 / ATCC 700928 / UPEC)</name>
    <dbReference type="NCBI Taxonomy" id="199310"/>
    <lineage>
        <taxon>Bacteria</taxon>
        <taxon>Pseudomonadati</taxon>
        <taxon>Pseudomonadota</taxon>
        <taxon>Gammaproteobacteria</taxon>
        <taxon>Enterobacterales</taxon>
        <taxon>Enterobacteriaceae</taxon>
        <taxon>Escherichia</taxon>
    </lineage>
</organism>